<protein>
    <recommendedName>
        <fullName evidence="1">Large ribosomal subunit protein bL32</fullName>
    </recommendedName>
    <alternativeName>
        <fullName evidence="2">50S ribosomal protein L32</fullName>
    </alternativeName>
</protein>
<sequence length="61" mass="6904">MAHPKRKISKTRRDKRRTHYKAVASQFVECSNCSAPVLLHIVCPECGHYRGKLAIEKALAV</sequence>
<accession>Q11UM1</accession>
<organism>
    <name type="scientific">Cytophaga hutchinsonii (strain ATCC 33406 / DSM 1761 / CIP 103989 / NBRC 15051 / NCIMB 9469 / D465)</name>
    <dbReference type="NCBI Taxonomy" id="269798"/>
    <lineage>
        <taxon>Bacteria</taxon>
        <taxon>Pseudomonadati</taxon>
        <taxon>Bacteroidota</taxon>
        <taxon>Cytophagia</taxon>
        <taxon>Cytophagales</taxon>
        <taxon>Cytophagaceae</taxon>
        <taxon>Cytophaga</taxon>
    </lineage>
</organism>
<keyword id="KW-1185">Reference proteome</keyword>
<keyword id="KW-0687">Ribonucleoprotein</keyword>
<keyword id="KW-0689">Ribosomal protein</keyword>
<proteinExistence type="inferred from homology"/>
<feature type="chain" id="PRO_0000296455" description="Large ribosomal subunit protein bL32">
    <location>
        <begin position="1"/>
        <end position="61"/>
    </location>
</feature>
<gene>
    <name evidence="1" type="primary">rpmF</name>
    <name type="ordered locus">CHU_1625.1</name>
    <name type="ORF">CHU_1625a</name>
</gene>
<evidence type="ECO:0000255" key="1">
    <source>
        <dbReference type="HAMAP-Rule" id="MF_00340"/>
    </source>
</evidence>
<evidence type="ECO:0000305" key="2"/>
<comment type="similarity">
    <text evidence="1">Belongs to the bacterial ribosomal protein bL32 family.</text>
</comment>
<name>RL32_CYTH3</name>
<reference key="1">
    <citation type="journal article" date="2007" name="Appl. Environ. Microbiol.">
        <title>Genome sequence of the cellulolytic gliding bacterium Cytophaga hutchinsonii.</title>
        <authorList>
            <person name="Xie G."/>
            <person name="Bruce D.C."/>
            <person name="Challacombe J.F."/>
            <person name="Chertkov O."/>
            <person name="Detter J.C."/>
            <person name="Gilna P."/>
            <person name="Han C.S."/>
            <person name="Lucas S."/>
            <person name="Misra M."/>
            <person name="Myers G.L."/>
            <person name="Richardson P."/>
            <person name="Tapia R."/>
            <person name="Thayer N."/>
            <person name="Thompson L.S."/>
            <person name="Brettin T.S."/>
            <person name="Henrissat B."/>
            <person name="Wilson D.B."/>
            <person name="McBride M.J."/>
        </authorList>
    </citation>
    <scope>NUCLEOTIDE SEQUENCE [LARGE SCALE GENOMIC DNA]</scope>
    <source>
        <strain>ATCC 33406 / DSM 1761 / JCM 20678 / CIP 103989 / IAM 12607 / NBRC 15051 / NCIMB 9469 / D465</strain>
    </source>
</reference>
<dbReference type="EMBL" id="CP000383">
    <property type="protein sequence ID" value="ABG61078.1"/>
    <property type="molecule type" value="Genomic_DNA"/>
</dbReference>
<dbReference type="RefSeq" id="WP_011585010.1">
    <property type="nucleotide sequence ID" value="NC_008255.1"/>
</dbReference>
<dbReference type="SMR" id="Q11UM1"/>
<dbReference type="STRING" id="269798.CHU_1625a"/>
<dbReference type="KEGG" id="chu:CHU_1625a"/>
<dbReference type="eggNOG" id="COG0333">
    <property type="taxonomic scope" value="Bacteria"/>
</dbReference>
<dbReference type="HOGENOM" id="CLU_129084_1_3_10"/>
<dbReference type="OrthoDB" id="9812874at2"/>
<dbReference type="Proteomes" id="UP000001822">
    <property type="component" value="Chromosome"/>
</dbReference>
<dbReference type="GO" id="GO:0015934">
    <property type="term" value="C:large ribosomal subunit"/>
    <property type="evidence" value="ECO:0007669"/>
    <property type="project" value="InterPro"/>
</dbReference>
<dbReference type="GO" id="GO:0003735">
    <property type="term" value="F:structural constituent of ribosome"/>
    <property type="evidence" value="ECO:0007669"/>
    <property type="project" value="InterPro"/>
</dbReference>
<dbReference type="GO" id="GO:0006412">
    <property type="term" value="P:translation"/>
    <property type="evidence" value="ECO:0007669"/>
    <property type="project" value="UniProtKB-UniRule"/>
</dbReference>
<dbReference type="HAMAP" id="MF_00340">
    <property type="entry name" value="Ribosomal_bL32"/>
    <property type="match status" value="1"/>
</dbReference>
<dbReference type="InterPro" id="IPR002677">
    <property type="entry name" value="Ribosomal_bL32"/>
</dbReference>
<dbReference type="InterPro" id="IPR044957">
    <property type="entry name" value="Ribosomal_bL32_bact"/>
</dbReference>
<dbReference type="InterPro" id="IPR011332">
    <property type="entry name" value="Ribosomal_zn-bd"/>
</dbReference>
<dbReference type="NCBIfam" id="TIGR01031">
    <property type="entry name" value="rpmF_bact"/>
    <property type="match status" value="1"/>
</dbReference>
<dbReference type="PANTHER" id="PTHR35534">
    <property type="entry name" value="50S RIBOSOMAL PROTEIN L32"/>
    <property type="match status" value="1"/>
</dbReference>
<dbReference type="PANTHER" id="PTHR35534:SF1">
    <property type="entry name" value="LARGE RIBOSOMAL SUBUNIT PROTEIN BL32"/>
    <property type="match status" value="1"/>
</dbReference>
<dbReference type="Pfam" id="PF01783">
    <property type="entry name" value="Ribosomal_L32p"/>
    <property type="match status" value="1"/>
</dbReference>
<dbReference type="SUPFAM" id="SSF57829">
    <property type="entry name" value="Zn-binding ribosomal proteins"/>
    <property type="match status" value="1"/>
</dbReference>